<evidence type="ECO:0000250" key="1"/>
<evidence type="ECO:0000255" key="2">
    <source>
        <dbReference type="HAMAP-Rule" id="MF_00248"/>
    </source>
</evidence>
<evidence type="ECO:0000269" key="3">
    <source>
    </source>
</evidence>
<evidence type="ECO:0000269" key="4">
    <source>
    </source>
</evidence>
<evidence type="ECO:0000269" key="5">
    <source>
    </source>
</evidence>
<evidence type="ECO:0000269" key="6">
    <source>
    </source>
</evidence>
<evidence type="ECO:0000269" key="7">
    <source>
    </source>
</evidence>
<evidence type="ECO:0007829" key="8">
    <source>
        <dbReference type="PDB" id="1G3K"/>
    </source>
</evidence>
<comment type="function">
    <text>Protease subunit of a proteasome-like degradation complex believed to be a general protein degrading machinery.</text>
</comment>
<comment type="catalytic activity">
    <reaction evidence="2">
        <text>ATP-dependent cleavage of peptide bonds with broad specificity.</text>
        <dbReference type="EC" id="3.4.25.2"/>
    </reaction>
</comment>
<comment type="activity regulation">
    <text evidence="2 5">Allosterically activated by HslU binding.</text>
</comment>
<comment type="biophysicochemical properties">
    <kinetics>
        <KM evidence="7">2.3 uM for Arc-H(6)-SulA(CT)</KM>
        <text>Arc-H(6)-SulA(CT) is a construct consisting of the Arc repressor protein fused to 6 His residues and the 11 carboxy terminal residues of SulA.</text>
    </kinetics>
</comment>
<comment type="subunit">
    <text evidence="2 3 4 5 6">A double ring-shaped homohexamer of HslV is capped on each side by a ring-shaped HslU homohexamer. The assembly of the HslU/HslV complex is dependent on binding of ATP.</text>
</comment>
<comment type="interaction">
    <interactant intactId="EBI-1030290">
        <id>P43772</id>
    </interactant>
    <interactant intactId="EBI-1030296">
        <id>P43773</id>
        <label>hslU</label>
    </interactant>
    <organismsDiffer>false</organismsDiffer>
    <experiments>4</experiments>
</comment>
<comment type="subcellular location">
    <subcellularLocation>
        <location evidence="2">Cytoplasm</location>
    </subcellularLocation>
</comment>
<comment type="similarity">
    <text evidence="2">Belongs to the peptidase T1B family. HslV subfamily.</text>
</comment>
<proteinExistence type="evidence at protein level"/>
<organism>
    <name type="scientific">Haemophilus influenzae (strain ATCC 51907 / DSM 11121 / KW20 / Rd)</name>
    <dbReference type="NCBI Taxonomy" id="71421"/>
    <lineage>
        <taxon>Bacteria</taxon>
        <taxon>Pseudomonadati</taxon>
        <taxon>Pseudomonadota</taxon>
        <taxon>Gammaproteobacteria</taxon>
        <taxon>Pasteurellales</taxon>
        <taxon>Pasteurellaceae</taxon>
        <taxon>Haemophilus</taxon>
    </lineage>
</organism>
<dbReference type="EC" id="3.4.25.2" evidence="2"/>
<dbReference type="EMBL" id="L42023">
    <property type="protein sequence ID" value="AAC22153.1"/>
    <property type="molecule type" value="Genomic_DNA"/>
</dbReference>
<dbReference type="PIR" id="C64072">
    <property type="entry name" value="C64072"/>
</dbReference>
<dbReference type="RefSeq" id="NP_438654.1">
    <property type="nucleotide sequence ID" value="NC_000907.1"/>
</dbReference>
<dbReference type="PDB" id="1G3I">
    <property type="method" value="X-ray"/>
    <property type="resolution" value="3.41 A"/>
    <property type="chains" value="G/H/I/J/K/L/M/N/O/P/Q/R=2-175"/>
</dbReference>
<dbReference type="PDB" id="1G3K">
    <property type="method" value="X-ray"/>
    <property type="resolution" value="1.90 A"/>
    <property type="chains" value="A/B/C=2-175"/>
</dbReference>
<dbReference type="PDB" id="1JJW">
    <property type="method" value="X-ray"/>
    <property type="resolution" value="1.90 A"/>
    <property type="chains" value="A/B/C=2-175"/>
</dbReference>
<dbReference type="PDB" id="1KYI">
    <property type="method" value="X-ray"/>
    <property type="resolution" value="3.10 A"/>
    <property type="chains" value="G/H/I/J/K/L/M/N/O/P/Q/R=2-175"/>
</dbReference>
<dbReference type="PDB" id="1OFH">
    <property type="method" value="X-ray"/>
    <property type="resolution" value="2.50 A"/>
    <property type="chains" value="G/H/I/L/M/N=2-175"/>
</dbReference>
<dbReference type="PDB" id="1OFI">
    <property type="method" value="X-ray"/>
    <property type="resolution" value="3.20 A"/>
    <property type="chains" value="G/H/I/L/M/N=2-175"/>
</dbReference>
<dbReference type="PDBsum" id="1G3I"/>
<dbReference type="PDBsum" id="1G3K"/>
<dbReference type="PDBsum" id="1JJW"/>
<dbReference type="PDBsum" id="1KYI"/>
<dbReference type="PDBsum" id="1OFH"/>
<dbReference type="PDBsum" id="1OFI"/>
<dbReference type="SMR" id="P43772"/>
<dbReference type="DIP" id="DIP-6176N"/>
<dbReference type="IntAct" id="P43772">
    <property type="interactions" value="1"/>
</dbReference>
<dbReference type="STRING" id="71421.HI_0496"/>
<dbReference type="MEROPS" id="T01.006"/>
<dbReference type="EnsemblBacteria" id="AAC22153">
    <property type="protein sequence ID" value="AAC22153"/>
    <property type="gene ID" value="HI_0496"/>
</dbReference>
<dbReference type="KEGG" id="hin:HI_0496"/>
<dbReference type="PATRIC" id="fig|71421.8.peg.514"/>
<dbReference type="eggNOG" id="COG5405">
    <property type="taxonomic scope" value="Bacteria"/>
</dbReference>
<dbReference type="HOGENOM" id="CLU_093872_1_0_6"/>
<dbReference type="OrthoDB" id="9804884at2"/>
<dbReference type="PhylomeDB" id="P43772"/>
<dbReference type="BioCyc" id="HINF71421:G1GJ1-509-MONOMER"/>
<dbReference type="BRENDA" id="3.4.25.2">
    <property type="organism ID" value="2529"/>
</dbReference>
<dbReference type="EvolutionaryTrace" id="P43772"/>
<dbReference type="Proteomes" id="UP000000579">
    <property type="component" value="Chromosome"/>
</dbReference>
<dbReference type="GO" id="GO:0005737">
    <property type="term" value="C:cytoplasm"/>
    <property type="evidence" value="ECO:0000318"/>
    <property type="project" value="GO_Central"/>
</dbReference>
<dbReference type="GO" id="GO:0009376">
    <property type="term" value="C:HslUV protease complex"/>
    <property type="evidence" value="ECO:0007669"/>
    <property type="project" value="UniProtKB-UniRule"/>
</dbReference>
<dbReference type="GO" id="GO:0005839">
    <property type="term" value="C:proteasome core complex"/>
    <property type="evidence" value="ECO:0007669"/>
    <property type="project" value="InterPro"/>
</dbReference>
<dbReference type="GO" id="GO:0046872">
    <property type="term" value="F:metal ion binding"/>
    <property type="evidence" value="ECO:0007669"/>
    <property type="project" value="UniProtKB-KW"/>
</dbReference>
<dbReference type="GO" id="GO:0004298">
    <property type="term" value="F:threonine-type endopeptidase activity"/>
    <property type="evidence" value="ECO:0007669"/>
    <property type="project" value="UniProtKB-KW"/>
</dbReference>
<dbReference type="GO" id="GO:0051603">
    <property type="term" value="P:proteolysis involved in protein catabolic process"/>
    <property type="evidence" value="ECO:0000318"/>
    <property type="project" value="GO_Central"/>
</dbReference>
<dbReference type="CDD" id="cd01913">
    <property type="entry name" value="protease_HslV"/>
    <property type="match status" value="1"/>
</dbReference>
<dbReference type="FunFam" id="3.60.20.10:FF:000002">
    <property type="entry name" value="ATP-dependent protease subunit HslV"/>
    <property type="match status" value="1"/>
</dbReference>
<dbReference type="Gene3D" id="3.60.20.10">
    <property type="entry name" value="Glutamine Phosphoribosylpyrophosphate, subunit 1, domain 1"/>
    <property type="match status" value="1"/>
</dbReference>
<dbReference type="HAMAP" id="MF_00248">
    <property type="entry name" value="HslV"/>
    <property type="match status" value="1"/>
</dbReference>
<dbReference type="InterPro" id="IPR022281">
    <property type="entry name" value="ATP-dep_Prtase_HsIV_su"/>
</dbReference>
<dbReference type="InterPro" id="IPR029055">
    <property type="entry name" value="Ntn_hydrolases_N"/>
</dbReference>
<dbReference type="InterPro" id="IPR001353">
    <property type="entry name" value="Proteasome_sua/b"/>
</dbReference>
<dbReference type="InterPro" id="IPR023333">
    <property type="entry name" value="Proteasome_suB-type"/>
</dbReference>
<dbReference type="NCBIfam" id="TIGR03692">
    <property type="entry name" value="ATP_dep_HslV"/>
    <property type="match status" value="1"/>
</dbReference>
<dbReference type="NCBIfam" id="NF003964">
    <property type="entry name" value="PRK05456.1"/>
    <property type="match status" value="1"/>
</dbReference>
<dbReference type="PANTHER" id="PTHR32194:SF0">
    <property type="entry name" value="ATP-DEPENDENT PROTEASE SUBUNIT HSLV"/>
    <property type="match status" value="1"/>
</dbReference>
<dbReference type="PANTHER" id="PTHR32194">
    <property type="entry name" value="METALLOPROTEASE TLDD"/>
    <property type="match status" value="1"/>
</dbReference>
<dbReference type="Pfam" id="PF00227">
    <property type="entry name" value="Proteasome"/>
    <property type="match status" value="1"/>
</dbReference>
<dbReference type="PIRSF" id="PIRSF039093">
    <property type="entry name" value="HslV"/>
    <property type="match status" value="1"/>
</dbReference>
<dbReference type="SUPFAM" id="SSF56235">
    <property type="entry name" value="N-terminal nucleophile aminohydrolases (Ntn hydrolases)"/>
    <property type="match status" value="1"/>
</dbReference>
<dbReference type="PROSITE" id="PS51476">
    <property type="entry name" value="PROTEASOME_BETA_2"/>
    <property type="match status" value="1"/>
</dbReference>
<name>HSLV_HAEIN</name>
<accession>P43772</accession>
<keyword id="KW-0002">3D-structure</keyword>
<keyword id="KW-0021">Allosteric enzyme</keyword>
<keyword id="KW-0963">Cytoplasm</keyword>
<keyword id="KW-0378">Hydrolase</keyword>
<keyword id="KW-0479">Metal-binding</keyword>
<keyword id="KW-0645">Protease</keyword>
<keyword id="KW-1185">Reference proteome</keyword>
<keyword id="KW-0915">Sodium</keyword>
<keyword id="KW-0888">Threonine protease</keyword>
<feature type="initiator methionine" description="Removed" evidence="1">
    <location>
        <position position="1"/>
    </location>
</feature>
<feature type="chain" id="PRO_0000148111" description="ATP-dependent protease subunit HslV">
    <location>
        <begin position="2"/>
        <end position="175"/>
    </location>
</feature>
<feature type="active site">
    <location>
        <position position="2"/>
    </location>
</feature>
<feature type="binding site">
    <location>
        <position position="158"/>
    </location>
    <ligand>
        <name>Na(+)</name>
        <dbReference type="ChEBI" id="CHEBI:29101"/>
    </ligand>
</feature>
<feature type="binding site">
    <location>
        <position position="161"/>
    </location>
    <ligand>
        <name>Na(+)</name>
        <dbReference type="ChEBI" id="CHEBI:29101"/>
    </ligand>
</feature>
<feature type="binding site">
    <location>
        <position position="164"/>
    </location>
    <ligand>
        <name>Na(+)</name>
        <dbReference type="ChEBI" id="CHEBI:29101"/>
    </ligand>
</feature>
<feature type="strand" evidence="8">
    <location>
        <begin position="4"/>
        <end position="9"/>
    </location>
</feature>
<feature type="strand" evidence="8">
    <location>
        <begin position="12"/>
        <end position="17"/>
    </location>
</feature>
<feature type="strand" evidence="8">
    <location>
        <begin position="21"/>
        <end position="23"/>
    </location>
</feature>
<feature type="strand" evidence="8">
    <location>
        <begin position="26"/>
        <end position="30"/>
    </location>
</feature>
<feature type="strand" evidence="8">
    <location>
        <begin position="35"/>
        <end position="38"/>
    </location>
</feature>
<feature type="turn" evidence="8">
    <location>
        <begin position="39"/>
        <end position="42"/>
    </location>
</feature>
<feature type="strand" evidence="8">
    <location>
        <begin position="43"/>
        <end position="49"/>
    </location>
</feature>
<feature type="helix" evidence="8">
    <location>
        <begin position="51"/>
        <end position="67"/>
    </location>
</feature>
<feature type="turn" evidence="8">
    <location>
        <begin position="68"/>
        <end position="70"/>
    </location>
</feature>
<feature type="helix" evidence="8">
    <location>
        <begin position="72"/>
        <end position="85"/>
    </location>
</feature>
<feature type="helix" evidence="8">
    <location>
        <begin position="89"/>
        <end position="91"/>
    </location>
</feature>
<feature type="strand" evidence="8">
    <location>
        <begin position="95"/>
        <end position="99"/>
    </location>
</feature>
<feature type="strand" evidence="8">
    <location>
        <begin position="104"/>
        <end position="108"/>
    </location>
</feature>
<feature type="turn" evidence="8">
    <location>
        <begin position="109"/>
        <end position="111"/>
    </location>
</feature>
<feature type="strand" evidence="8">
    <location>
        <begin position="112"/>
        <end position="114"/>
    </location>
</feature>
<feature type="strand" evidence="8">
    <location>
        <begin position="121"/>
        <end position="125"/>
    </location>
</feature>
<feature type="helix" evidence="8">
    <location>
        <begin position="128"/>
        <end position="141"/>
    </location>
</feature>
<feature type="helix" evidence="8">
    <location>
        <begin position="146"/>
        <end position="160"/>
    </location>
</feature>
<feature type="strand" evidence="8">
    <location>
        <begin position="169"/>
        <end position="173"/>
    </location>
</feature>
<sequence>MTTIVSVRRNGQVVVGGDGQVSLGNTVMKGNARKVRRLYNGKVLAGFAGGTADAFTLFELFERKLEMHQGHLLKSAVELAKDWRTDRALRKLEAMLIVADEKESLIITGIGDVVQPEEDQILAIGSGGNYALSAARALVENTELSAHEIVEKSLRIAGDICVFTNTNFTIEELPN</sequence>
<gene>
    <name evidence="2" type="primary">hslV</name>
    <name type="ordered locus">HI_0496</name>
</gene>
<protein>
    <recommendedName>
        <fullName evidence="2">ATP-dependent protease subunit HslV</fullName>
        <ecNumber evidence="2">3.4.25.2</ecNumber>
    </recommendedName>
</protein>
<reference key="1">
    <citation type="journal article" date="1995" name="Science">
        <title>Whole-genome random sequencing and assembly of Haemophilus influenzae Rd.</title>
        <authorList>
            <person name="Fleischmann R.D."/>
            <person name="Adams M.D."/>
            <person name="White O."/>
            <person name="Clayton R.A."/>
            <person name="Kirkness E.F."/>
            <person name="Kerlavage A.R."/>
            <person name="Bult C.J."/>
            <person name="Tomb J.-F."/>
            <person name="Dougherty B.A."/>
            <person name="Merrick J.M."/>
            <person name="McKenney K."/>
            <person name="Sutton G.G."/>
            <person name="FitzHugh W."/>
            <person name="Fields C.A."/>
            <person name="Gocayne J.D."/>
            <person name="Scott J.D."/>
            <person name="Shirley R."/>
            <person name="Liu L.-I."/>
            <person name="Glodek A."/>
            <person name="Kelley J.M."/>
            <person name="Weidman J.F."/>
            <person name="Phillips C.A."/>
            <person name="Spriggs T."/>
            <person name="Hedblom E."/>
            <person name="Cotton M.D."/>
            <person name="Utterback T.R."/>
            <person name="Hanna M.C."/>
            <person name="Nguyen D.T."/>
            <person name="Saudek D.M."/>
            <person name="Brandon R.C."/>
            <person name="Fine L.D."/>
            <person name="Fritchman J.L."/>
            <person name="Fuhrmann J.L."/>
            <person name="Geoghagen N.S.M."/>
            <person name="Gnehm C.L."/>
            <person name="McDonald L.A."/>
            <person name="Small K.V."/>
            <person name="Fraser C.M."/>
            <person name="Smith H.O."/>
            <person name="Venter J.C."/>
        </authorList>
    </citation>
    <scope>NUCLEOTIDE SEQUENCE [LARGE SCALE GENOMIC DNA]</scope>
    <source>
        <strain>ATCC 51907 / DSM 11121 / KW20 / Rd</strain>
    </source>
</reference>
<reference key="2">
    <citation type="journal article" date="2004" name="J. Struct. Biol.">
        <title>Kinetics of protein substrate degradation by HslUV.</title>
        <authorList>
            <person name="Kwon A.-R."/>
            <person name="Trame C.B."/>
            <person name="McKay D.B."/>
        </authorList>
    </citation>
    <scope>BIOPHYSICOCHEMICAL PROPERTIES</scope>
</reference>
<reference key="3">
    <citation type="journal article" date="2000" name="Cell">
        <title>Crystal and solution structures of an HslUV protease-chaperone complex.</title>
        <authorList>
            <person name="Sousa M.C."/>
            <person name="Trame C.B."/>
            <person name="Tsuruta H."/>
            <person name="Wilbanks S.M."/>
            <person name="Reddy V.S."/>
            <person name="McKay D.B."/>
        </authorList>
    </citation>
    <scope>X-RAY CRYSTALLOGRAPHY (3.41 ANGSTROMS) OF 2-175 IN COMPLEX WITH HSLU</scope>
</reference>
<reference key="4">
    <citation type="journal article" date="2001" name="Acta Crystallogr. D">
        <title>Structure of Haemophilus influenzae HslV protein at 1.9 A resolution, revealing a cation-binding site near the catalytic site.</title>
        <authorList>
            <person name="Sousa M.C."/>
            <person name="McKay D.B."/>
        </authorList>
    </citation>
    <scope>X-RAY CRYSTALLOGRAPHY (1.9 ANGSTROMS) IN COMPLEX WITH POTASSIUM OR SODIUM</scope>
</reference>
<reference key="5">
    <citation type="journal article" date="2002" name="J. Mol. Biol.">
        <title>Crystal structure of HslUV complexed with a vinyl sulfone inhibitor: corroboration of a proposed mechanism of allosteric activation of HslV by HslU.</title>
        <authorList>
            <person name="Sousa M.C."/>
            <person name="Kessler B.M."/>
            <person name="Overkleeft H.S."/>
            <person name="McKay D.B."/>
        </authorList>
    </citation>
    <scope>X-RAY CRYSTALLOGRAPHY (3.1 ANGSTROMS) OF 2-174 IN COMPLEX WITH HSLU AND INHIBITOR</scope>
    <scope>ACTIVITY REGULATION</scope>
</reference>
<reference key="6">
    <citation type="journal article" date="2003" name="J. Mol. Biol.">
        <title>Structure and reactivity of an asymmetric complex between HslV and I-domain deleted HslU, a prokaryotic homolog of the eukaryotic proteasome.</title>
        <authorList>
            <person name="Kwon A.-R."/>
            <person name="Kessler B.M."/>
            <person name="Overkleeft H.S."/>
            <person name="McKay D.B."/>
        </authorList>
    </citation>
    <scope>X-RAY CRYSTALLOGRAPHY (2.5 ANGSTROMS) OF 2-174 IN COMPLEX WITH HSLU; MAGNESIUM; ADP AND INHIBITOR</scope>
</reference>